<proteinExistence type="inferred from homology"/>
<comment type="similarity">
    <text evidence="1">Belongs to the DsrB family.</text>
</comment>
<name>DSRB_PECCP</name>
<reference key="1">
    <citation type="submission" date="2009-07" db="EMBL/GenBank/DDBJ databases">
        <title>Complete sequence of Pectobacterium carotovorum subsp. carotovorum PC1.</title>
        <authorList>
            <consortium name="US DOE Joint Genome Institute"/>
            <person name="Lucas S."/>
            <person name="Copeland A."/>
            <person name="Lapidus A."/>
            <person name="Glavina del Rio T."/>
            <person name="Tice H."/>
            <person name="Bruce D."/>
            <person name="Goodwin L."/>
            <person name="Pitluck S."/>
            <person name="Munk A.C."/>
            <person name="Brettin T."/>
            <person name="Detter J.C."/>
            <person name="Han C."/>
            <person name="Tapia R."/>
            <person name="Larimer F."/>
            <person name="Land M."/>
            <person name="Hauser L."/>
            <person name="Kyrpides N."/>
            <person name="Mikhailova N."/>
            <person name="Balakrishnan V."/>
            <person name="Glasner J."/>
            <person name="Perna N.T."/>
        </authorList>
    </citation>
    <scope>NUCLEOTIDE SEQUENCE [LARGE SCALE GENOMIC DNA]</scope>
    <source>
        <strain>PC1</strain>
    </source>
</reference>
<dbReference type="EMBL" id="CP001657">
    <property type="protein sequence ID" value="ACT13648.1"/>
    <property type="molecule type" value="Genomic_DNA"/>
</dbReference>
<dbReference type="RefSeq" id="WP_015840819.1">
    <property type="nucleotide sequence ID" value="NC_012917.1"/>
</dbReference>
<dbReference type="SMR" id="C6D9C1"/>
<dbReference type="GeneID" id="67794614"/>
<dbReference type="KEGG" id="pct:PC1_2618"/>
<dbReference type="eggNOG" id="ENOG5032ZW5">
    <property type="taxonomic scope" value="Bacteria"/>
</dbReference>
<dbReference type="HOGENOM" id="CLU_189289_0_0_6"/>
<dbReference type="OrthoDB" id="6548256at2"/>
<dbReference type="Proteomes" id="UP000002736">
    <property type="component" value="Chromosome"/>
</dbReference>
<dbReference type="HAMAP" id="MF_01549">
    <property type="entry name" value="DsrB"/>
    <property type="match status" value="1"/>
</dbReference>
<dbReference type="InterPro" id="IPR019717">
    <property type="entry name" value="Dextransucrase_DSRB"/>
</dbReference>
<dbReference type="NCBIfam" id="NF007981">
    <property type="entry name" value="PRK10708.1"/>
    <property type="match status" value="1"/>
</dbReference>
<dbReference type="Pfam" id="PF10781">
    <property type="entry name" value="DSRB"/>
    <property type="match status" value="1"/>
</dbReference>
<feature type="chain" id="PRO_1000215464" description="Protein DsrB">
    <location>
        <begin position="1"/>
        <end position="67"/>
    </location>
</feature>
<accession>C6D9C1</accession>
<organism>
    <name type="scientific">Pectobacterium carotovorum subsp. carotovorum (strain PC1)</name>
    <dbReference type="NCBI Taxonomy" id="561230"/>
    <lineage>
        <taxon>Bacteria</taxon>
        <taxon>Pseudomonadati</taxon>
        <taxon>Pseudomonadota</taxon>
        <taxon>Gammaproteobacteria</taxon>
        <taxon>Enterobacterales</taxon>
        <taxon>Pectobacteriaceae</taxon>
        <taxon>Pectobacterium</taxon>
    </lineage>
</organism>
<protein>
    <recommendedName>
        <fullName evidence="1">Protein DsrB</fullName>
    </recommendedName>
</protein>
<evidence type="ECO:0000255" key="1">
    <source>
        <dbReference type="HAMAP-Rule" id="MF_01549"/>
    </source>
</evidence>
<sequence>MKVNDLVTVKTDGKTRREGTILAVETFQEGIMYLVALKDYPAGIWFFNEADSKDGTFVEPKTLPDEE</sequence>
<gene>
    <name evidence="1" type="primary">dsrB</name>
    <name type="ordered locus">PC1_2618</name>
</gene>